<protein>
    <recommendedName>
        <fullName evidence="1">3'-5' ssDNA/RNA exonuclease TatD</fullName>
        <ecNumber evidence="1">3.1.11.-</ecNumber>
        <ecNumber evidence="1">3.1.13.-</ecNumber>
    </recommendedName>
    <alternativeName>
        <fullName evidence="1">DNase TatD</fullName>
    </alternativeName>
</protein>
<comment type="function">
    <text evidence="1">3'-5' exonuclease that prefers single-stranded DNA and RNA. May play a role in the H(2)O(2)-induced DNA damage repair.</text>
</comment>
<comment type="cofactor">
    <cofactor evidence="1">
        <name>Mg(2+)</name>
        <dbReference type="ChEBI" id="CHEBI:18420"/>
    </cofactor>
</comment>
<comment type="subunit">
    <text evidence="1">Monomer.</text>
</comment>
<comment type="subcellular location">
    <subcellularLocation>
        <location evidence="1">Cytoplasm</location>
    </subcellularLocation>
</comment>
<comment type="similarity">
    <text evidence="1">Belongs to the metallo-dependent hydrolases superfamily. TatD-type hydrolase family. TatD subfamily.</text>
</comment>
<gene>
    <name evidence="1" type="primary">tatD</name>
    <name type="ordered locus">Dd703_3757</name>
</gene>
<dbReference type="EC" id="3.1.11.-" evidence="1"/>
<dbReference type="EC" id="3.1.13.-" evidence="1"/>
<dbReference type="EMBL" id="CP001654">
    <property type="protein sequence ID" value="ACS87511.1"/>
    <property type="molecule type" value="Genomic_DNA"/>
</dbReference>
<dbReference type="RefSeq" id="WP_015855404.1">
    <property type="nucleotide sequence ID" value="NC_012880.1"/>
</dbReference>
<dbReference type="SMR" id="C6C4V4"/>
<dbReference type="STRING" id="579405.Dd703_3757"/>
<dbReference type="KEGG" id="dda:Dd703_3757"/>
<dbReference type="eggNOG" id="COG0084">
    <property type="taxonomic scope" value="Bacteria"/>
</dbReference>
<dbReference type="HOGENOM" id="CLU_031506_1_2_6"/>
<dbReference type="Proteomes" id="UP000002734">
    <property type="component" value="Chromosome"/>
</dbReference>
<dbReference type="GO" id="GO:0005737">
    <property type="term" value="C:cytoplasm"/>
    <property type="evidence" value="ECO:0007669"/>
    <property type="project" value="UniProtKB-SubCell"/>
</dbReference>
<dbReference type="GO" id="GO:0000175">
    <property type="term" value="F:3'-5'-RNA exonuclease activity"/>
    <property type="evidence" value="ECO:0007669"/>
    <property type="project" value="UniProtKB-UniRule"/>
</dbReference>
<dbReference type="GO" id="GO:0000287">
    <property type="term" value="F:magnesium ion binding"/>
    <property type="evidence" value="ECO:0007669"/>
    <property type="project" value="UniProtKB-UniRule"/>
</dbReference>
<dbReference type="GO" id="GO:0008310">
    <property type="term" value="F:single-stranded DNA 3'-5' DNA exonuclease activity"/>
    <property type="evidence" value="ECO:0007669"/>
    <property type="project" value="UniProtKB-UniRule"/>
</dbReference>
<dbReference type="CDD" id="cd01310">
    <property type="entry name" value="TatD_DNAse"/>
    <property type="match status" value="1"/>
</dbReference>
<dbReference type="FunFam" id="3.20.20.140:FF:000018">
    <property type="entry name" value="3'-5' ssDNA/RNA exonuclease TatD"/>
    <property type="match status" value="1"/>
</dbReference>
<dbReference type="Gene3D" id="3.20.20.140">
    <property type="entry name" value="Metal-dependent hydrolases"/>
    <property type="match status" value="1"/>
</dbReference>
<dbReference type="HAMAP" id="MF_00901">
    <property type="entry name" value="TatD_exonuclease"/>
    <property type="match status" value="1"/>
</dbReference>
<dbReference type="InterPro" id="IPR018228">
    <property type="entry name" value="DNase_TatD-rel_CS"/>
</dbReference>
<dbReference type="InterPro" id="IPR024918">
    <property type="entry name" value="Exonuc_TatD"/>
</dbReference>
<dbReference type="InterPro" id="IPR032466">
    <property type="entry name" value="Metal_Hydrolase"/>
</dbReference>
<dbReference type="InterPro" id="IPR001130">
    <property type="entry name" value="TatD-like"/>
</dbReference>
<dbReference type="InterPro" id="IPR050891">
    <property type="entry name" value="TatD-type_Hydrolase"/>
</dbReference>
<dbReference type="NCBIfam" id="NF007745">
    <property type="entry name" value="PRK10425.1"/>
    <property type="match status" value="1"/>
</dbReference>
<dbReference type="PANTHER" id="PTHR10060:SF15">
    <property type="entry name" value="DEOXYRIBONUCLEASE TATDN1"/>
    <property type="match status" value="1"/>
</dbReference>
<dbReference type="PANTHER" id="PTHR10060">
    <property type="entry name" value="TATD FAMILY DEOXYRIBONUCLEASE"/>
    <property type="match status" value="1"/>
</dbReference>
<dbReference type="Pfam" id="PF01026">
    <property type="entry name" value="TatD_DNase"/>
    <property type="match status" value="1"/>
</dbReference>
<dbReference type="PIRSF" id="PIRSF005902">
    <property type="entry name" value="DNase_TatD"/>
    <property type="match status" value="1"/>
</dbReference>
<dbReference type="SUPFAM" id="SSF51556">
    <property type="entry name" value="Metallo-dependent hydrolases"/>
    <property type="match status" value="1"/>
</dbReference>
<dbReference type="PROSITE" id="PS01091">
    <property type="entry name" value="TATD_3"/>
    <property type="match status" value="1"/>
</dbReference>
<reference key="1">
    <citation type="submission" date="2009-06" db="EMBL/GenBank/DDBJ databases">
        <title>Complete sequence of Dickeya dadantii Ech703.</title>
        <authorList>
            <consortium name="US DOE Joint Genome Institute"/>
            <person name="Lucas S."/>
            <person name="Copeland A."/>
            <person name="Lapidus A."/>
            <person name="Glavina del Rio T."/>
            <person name="Dalin E."/>
            <person name="Tice H."/>
            <person name="Bruce D."/>
            <person name="Goodwin L."/>
            <person name="Pitluck S."/>
            <person name="Chertkov O."/>
            <person name="Brettin T."/>
            <person name="Detter J.C."/>
            <person name="Han C."/>
            <person name="Larimer F."/>
            <person name="Land M."/>
            <person name="Hauser L."/>
            <person name="Kyrpides N."/>
            <person name="Mikhailova N."/>
            <person name="Balakrishnan V."/>
            <person name="Glasner J."/>
            <person name="Perna N.T."/>
        </authorList>
    </citation>
    <scope>NUCLEOTIDE SEQUENCE [LARGE SCALE GENOMIC DNA]</scope>
    <source>
        <strain>Ech703</strain>
    </source>
</reference>
<proteinExistence type="inferred from homology"/>
<evidence type="ECO:0000255" key="1">
    <source>
        <dbReference type="HAMAP-Rule" id="MF_00901"/>
    </source>
</evidence>
<accession>C6C4V4</accession>
<keyword id="KW-0963">Cytoplasm</keyword>
<keyword id="KW-0269">Exonuclease</keyword>
<keyword id="KW-0378">Hydrolase</keyword>
<keyword id="KW-0460">Magnesium</keyword>
<keyword id="KW-0479">Metal-binding</keyword>
<keyword id="KW-0540">Nuclease</keyword>
<name>TATD_MUSP7</name>
<feature type="chain" id="PRO_0000412734" description="3'-5' ssDNA/RNA exonuclease TatD">
    <location>
        <begin position="1"/>
        <end position="264"/>
    </location>
</feature>
<feature type="binding site" evidence="1">
    <location>
        <position position="92"/>
    </location>
    <ligand>
        <name>a divalent metal cation</name>
        <dbReference type="ChEBI" id="CHEBI:60240"/>
    </ligand>
</feature>
<feature type="binding site" evidence="1">
    <location>
        <position position="128"/>
    </location>
    <ligand>
        <name>a divalent metal cation</name>
        <dbReference type="ChEBI" id="CHEBI:60240"/>
    </ligand>
</feature>
<feature type="binding site" evidence="1">
    <location>
        <position position="153"/>
    </location>
    <ligand>
        <name>a divalent metal cation</name>
        <dbReference type="ChEBI" id="CHEBI:60240"/>
    </ligand>
</feature>
<sequence>MFDIGVNLTSSQFESDRDAVISRARREGVTGMLLTGTGIEESRHALRLAEGAPGYCWSTAGIHPHEASTWTDAAALSIRQLAVHPQVVAIGECGLDFNRNFSTPSEQERAFSAQLAIAADLGMPVFMHCREAHSRFMMLLRPWLEKLPAAVLHCFTGTRDELDECLQAGLSIGITGWVCDERRGLALRALLEYIPDDRLLLETDAPYLLPRDLHPKPTSRRNEPCFLPHIVRQVAAWRKQDAVALGRVVDDNARRIFRLGQKGE</sequence>
<organism>
    <name type="scientific">Musicola paradisiaca (strain Ech703)</name>
    <name type="common">Dickeya paradisiaca</name>
    <name type="synonym">Dickeya dadantii</name>
    <dbReference type="NCBI Taxonomy" id="579405"/>
    <lineage>
        <taxon>Bacteria</taxon>
        <taxon>Pseudomonadati</taxon>
        <taxon>Pseudomonadota</taxon>
        <taxon>Gammaproteobacteria</taxon>
        <taxon>Enterobacterales</taxon>
        <taxon>Pectobacteriaceae</taxon>
        <taxon>Musicola</taxon>
    </lineage>
</organism>